<protein>
    <recommendedName>
        <fullName evidence="1">Elongation factor G 1</fullName>
        <shortName evidence="1">EF-G 1</shortName>
    </recommendedName>
</protein>
<evidence type="ECO:0000255" key="1">
    <source>
        <dbReference type="HAMAP-Rule" id="MF_00054"/>
    </source>
</evidence>
<evidence type="ECO:0000305" key="2"/>
<accession>Q1BU86</accession>
<organism>
    <name type="scientific">Burkholderia orbicola (strain AU 1054)</name>
    <dbReference type="NCBI Taxonomy" id="331271"/>
    <lineage>
        <taxon>Bacteria</taxon>
        <taxon>Pseudomonadati</taxon>
        <taxon>Pseudomonadota</taxon>
        <taxon>Betaproteobacteria</taxon>
        <taxon>Burkholderiales</taxon>
        <taxon>Burkholderiaceae</taxon>
        <taxon>Burkholderia</taxon>
        <taxon>Burkholderia cepacia complex</taxon>
        <taxon>Burkholderia orbicola</taxon>
    </lineage>
</organism>
<dbReference type="EMBL" id="CP000378">
    <property type="protein sequence ID" value="ABF76819.1"/>
    <property type="status" value="ALT_INIT"/>
    <property type="molecule type" value="Genomic_DNA"/>
</dbReference>
<dbReference type="SMR" id="Q1BU86"/>
<dbReference type="HOGENOM" id="CLU_002794_4_1_4"/>
<dbReference type="GO" id="GO:0005737">
    <property type="term" value="C:cytoplasm"/>
    <property type="evidence" value="ECO:0007669"/>
    <property type="project" value="UniProtKB-SubCell"/>
</dbReference>
<dbReference type="GO" id="GO:0005525">
    <property type="term" value="F:GTP binding"/>
    <property type="evidence" value="ECO:0007669"/>
    <property type="project" value="UniProtKB-UniRule"/>
</dbReference>
<dbReference type="GO" id="GO:0003924">
    <property type="term" value="F:GTPase activity"/>
    <property type="evidence" value="ECO:0007669"/>
    <property type="project" value="InterPro"/>
</dbReference>
<dbReference type="GO" id="GO:0097216">
    <property type="term" value="F:guanosine tetraphosphate binding"/>
    <property type="evidence" value="ECO:0007669"/>
    <property type="project" value="UniProtKB-ARBA"/>
</dbReference>
<dbReference type="GO" id="GO:0003746">
    <property type="term" value="F:translation elongation factor activity"/>
    <property type="evidence" value="ECO:0007669"/>
    <property type="project" value="UniProtKB-UniRule"/>
</dbReference>
<dbReference type="GO" id="GO:0032790">
    <property type="term" value="P:ribosome disassembly"/>
    <property type="evidence" value="ECO:0007669"/>
    <property type="project" value="TreeGrafter"/>
</dbReference>
<dbReference type="CDD" id="cd01886">
    <property type="entry name" value="EF-G"/>
    <property type="match status" value="1"/>
</dbReference>
<dbReference type="CDD" id="cd16262">
    <property type="entry name" value="EFG_III"/>
    <property type="match status" value="1"/>
</dbReference>
<dbReference type="CDD" id="cd01434">
    <property type="entry name" value="EFG_mtEFG1_IV"/>
    <property type="match status" value="1"/>
</dbReference>
<dbReference type="CDD" id="cd03713">
    <property type="entry name" value="EFG_mtEFG_C"/>
    <property type="match status" value="1"/>
</dbReference>
<dbReference type="CDD" id="cd04088">
    <property type="entry name" value="EFG_mtEFG_II"/>
    <property type="match status" value="1"/>
</dbReference>
<dbReference type="FunFam" id="2.40.30.10:FF:000006">
    <property type="entry name" value="Elongation factor G"/>
    <property type="match status" value="1"/>
</dbReference>
<dbReference type="FunFam" id="3.30.230.10:FF:000003">
    <property type="entry name" value="Elongation factor G"/>
    <property type="match status" value="1"/>
</dbReference>
<dbReference type="FunFam" id="3.30.70.240:FF:000001">
    <property type="entry name" value="Elongation factor G"/>
    <property type="match status" value="1"/>
</dbReference>
<dbReference type="FunFam" id="3.30.70.870:FF:000001">
    <property type="entry name" value="Elongation factor G"/>
    <property type="match status" value="1"/>
</dbReference>
<dbReference type="FunFam" id="3.40.50.300:FF:000029">
    <property type="entry name" value="Elongation factor G"/>
    <property type="match status" value="1"/>
</dbReference>
<dbReference type="Gene3D" id="3.30.230.10">
    <property type="match status" value="1"/>
</dbReference>
<dbReference type="Gene3D" id="3.30.70.240">
    <property type="match status" value="1"/>
</dbReference>
<dbReference type="Gene3D" id="3.30.70.870">
    <property type="entry name" value="Elongation Factor G (Translational Gtpase), domain 3"/>
    <property type="match status" value="1"/>
</dbReference>
<dbReference type="Gene3D" id="3.40.50.300">
    <property type="entry name" value="P-loop containing nucleotide triphosphate hydrolases"/>
    <property type="match status" value="1"/>
</dbReference>
<dbReference type="Gene3D" id="2.40.30.10">
    <property type="entry name" value="Translation factors"/>
    <property type="match status" value="1"/>
</dbReference>
<dbReference type="HAMAP" id="MF_00054_B">
    <property type="entry name" value="EF_G_EF_2_B"/>
    <property type="match status" value="1"/>
</dbReference>
<dbReference type="InterPro" id="IPR041095">
    <property type="entry name" value="EFG_II"/>
</dbReference>
<dbReference type="InterPro" id="IPR009022">
    <property type="entry name" value="EFG_III"/>
</dbReference>
<dbReference type="InterPro" id="IPR035647">
    <property type="entry name" value="EFG_III/V"/>
</dbReference>
<dbReference type="InterPro" id="IPR047872">
    <property type="entry name" value="EFG_IV"/>
</dbReference>
<dbReference type="InterPro" id="IPR035649">
    <property type="entry name" value="EFG_V"/>
</dbReference>
<dbReference type="InterPro" id="IPR000640">
    <property type="entry name" value="EFG_V-like"/>
</dbReference>
<dbReference type="InterPro" id="IPR004161">
    <property type="entry name" value="EFTu-like_2"/>
</dbReference>
<dbReference type="InterPro" id="IPR027417">
    <property type="entry name" value="P-loop_NTPase"/>
</dbReference>
<dbReference type="InterPro" id="IPR020568">
    <property type="entry name" value="Ribosomal_Su5_D2-typ_SF"/>
</dbReference>
<dbReference type="InterPro" id="IPR014721">
    <property type="entry name" value="Ribsml_uS5_D2-typ_fold_subgr"/>
</dbReference>
<dbReference type="InterPro" id="IPR005225">
    <property type="entry name" value="Small_GTP-bd"/>
</dbReference>
<dbReference type="InterPro" id="IPR000795">
    <property type="entry name" value="T_Tr_GTP-bd_dom"/>
</dbReference>
<dbReference type="InterPro" id="IPR009000">
    <property type="entry name" value="Transl_B-barrel_sf"/>
</dbReference>
<dbReference type="InterPro" id="IPR004540">
    <property type="entry name" value="Transl_elong_EFG/EF2"/>
</dbReference>
<dbReference type="InterPro" id="IPR005517">
    <property type="entry name" value="Transl_elong_EFG/EF2_IV"/>
</dbReference>
<dbReference type="NCBIfam" id="TIGR00484">
    <property type="entry name" value="EF-G"/>
    <property type="match status" value="1"/>
</dbReference>
<dbReference type="NCBIfam" id="NF009381">
    <property type="entry name" value="PRK12740.1-5"/>
    <property type="match status" value="1"/>
</dbReference>
<dbReference type="NCBIfam" id="TIGR00231">
    <property type="entry name" value="small_GTP"/>
    <property type="match status" value="1"/>
</dbReference>
<dbReference type="PANTHER" id="PTHR43261:SF1">
    <property type="entry name" value="RIBOSOME-RELEASING FACTOR 2, MITOCHONDRIAL"/>
    <property type="match status" value="1"/>
</dbReference>
<dbReference type="PANTHER" id="PTHR43261">
    <property type="entry name" value="TRANSLATION ELONGATION FACTOR G-RELATED"/>
    <property type="match status" value="1"/>
</dbReference>
<dbReference type="Pfam" id="PF00679">
    <property type="entry name" value="EFG_C"/>
    <property type="match status" value="1"/>
</dbReference>
<dbReference type="Pfam" id="PF14492">
    <property type="entry name" value="EFG_III"/>
    <property type="match status" value="1"/>
</dbReference>
<dbReference type="Pfam" id="PF03764">
    <property type="entry name" value="EFG_IV"/>
    <property type="match status" value="1"/>
</dbReference>
<dbReference type="Pfam" id="PF00009">
    <property type="entry name" value="GTP_EFTU"/>
    <property type="match status" value="1"/>
</dbReference>
<dbReference type="Pfam" id="PF03144">
    <property type="entry name" value="GTP_EFTU_D2"/>
    <property type="match status" value="1"/>
</dbReference>
<dbReference type="PRINTS" id="PR00315">
    <property type="entry name" value="ELONGATNFCT"/>
</dbReference>
<dbReference type="SMART" id="SM00838">
    <property type="entry name" value="EFG_C"/>
    <property type="match status" value="1"/>
</dbReference>
<dbReference type="SMART" id="SM00889">
    <property type="entry name" value="EFG_IV"/>
    <property type="match status" value="1"/>
</dbReference>
<dbReference type="SUPFAM" id="SSF54980">
    <property type="entry name" value="EF-G C-terminal domain-like"/>
    <property type="match status" value="2"/>
</dbReference>
<dbReference type="SUPFAM" id="SSF52540">
    <property type="entry name" value="P-loop containing nucleoside triphosphate hydrolases"/>
    <property type="match status" value="1"/>
</dbReference>
<dbReference type="SUPFAM" id="SSF54211">
    <property type="entry name" value="Ribosomal protein S5 domain 2-like"/>
    <property type="match status" value="1"/>
</dbReference>
<dbReference type="SUPFAM" id="SSF50447">
    <property type="entry name" value="Translation proteins"/>
    <property type="match status" value="1"/>
</dbReference>
<dbReference type="PROSITE" id="PS51722">
    <property type="entry name" value="G_TR_2"/>
    <property type="match status" value="1"/>
</dbReference>
<keyword id="KW-0963">Cytoplasm</keyword>
<keyword id="KW-0251">Elongation factor</keyword>
<keyword id="KW-0342">GTP-binding</keyword>
<keyword id="KW-0547">Nucleotide-binding</keyword>
<keyword id="KW-0648">Protein biosynthesis</keyword>
<reference key="1">
    <citation type="submission" date="2006-05" db="EMBL/GenBank/DDBJ databases">
        <title>Complete sequence of chromosome 1 of Burkholderia cenocepacia AU 1054.</title>
        <authorList>
            <consortium name="US DOE Joint Genome Institute"/>
            <person name="Copeland A."/>
            <person name="Lucas S."/>
            <person name="Lapidus A."/>
            <person name="Barry K."/>
            <person name="Detter J.C."/>
            <person name="Glavina del Rio T."/>
            <person name="Hammon N."/>
            <person name="Israni S."/>
            <person name="Dalin E."/>
            <person name="Tice H."/>
            <person name="Pitluck S."/>
            <person name="Chain P."/>
            <person name="Malfatti S."/>
            <person name="Shin M."/>
            <person name="Vergez L."/>
            <person name="Schmutz J."/>
            <person name="Larimer F."/>
            <person name="Land M."/>
            <person name="Hauser L."/>
            <person name="Kyrpides N."/>
            <person name="Lykidis A."/>
            <person name="LiPuma J.J."/>
            <person name="Konstantinidis K."/>
            <person name="Tiedje J.M."/>
            <person name="Richardson P."/>
        </authorList>
    </citation>
    <scope>NUCLEOTIDE SEQUENCE [LARGE SCALE GENOMIC DNA]</scope>
    <source>
        <strain>AU 1054</strain>
    </source>
</reference>
<feature type="chain" id="PRO_0000263433" description="Elongation factor G 1">
    <location>
        <begin position="1"/>
        <end position="703"/>
    </location>
</feature>
<feature type="domain" description="tr-type G">
    <location>
        <begin position="8"/>
        <end position="291"/>
    </location>
</feature>
<feature type="binding site" evidence="1">
    <location>
        <begin position="17"/>
        <end position="24"/>
    </location>
    <ligand>
        <name>GTP</name>
        <dbReference type="ChEBI" id="CHEBI:37565"/>
    </ligand>
</feature>
<feature type="binding site" evidence="1">
    <location>
        <begin position="88"/>
        <end position="92"/>
    </location>
    <ligand>
        <name>GTP</name>
        <dbReference type="ChEBI" id="CHEBI:37565"/>
    </ligand>
</feature>
<feature type="binding site" evidence="1">
    <location>
        <begin position="142"/>
        <end position="145"/>
    </location>
    <ligand>
        <name>GTP</name>
        <dbReference type="ChEBI" id="CHEBI:37565"/>
    </ligand>
</feature>
<sequence length="703" mass="77633">MPRKTPIERYRNIGISAHIDAGKTTTTERILFYTGVSHKIGEVHDGAATMDWMEQGQERGITITSAATTAFWKGMAGNYPEHRINIIDTPGHVDFTIEVERSMRVLDGACMVYDSVGGVQPQSETVWRQANKYKVPRIAFVNKMDRIGADFFRVQKQIGERLKGVAVPIQIPIGAEDHFQGVVDLVKMKAIVWDDESQGVKFTYEDIPANLVELAHEWREKMVEAAAEASEELLEKYLHDHESLTEDEIKAALRQRTIANEIVPMLCGSAFKNKGVQAMLDAVIDYLPSPVDVPAILGHDFADPEKPAERHPSDDEPFSSLAFKIMTDPFVGQLIFFRVYSGVVESGDTVLNATKDKKERLGRILQMHANERKEIKEVRAGDIAAAVGLKEATTGDTLCDPQKPIILEKMEFPEPVISQAVEPKTKADQEKMGLALNRLAQEDPSFRVQTDEESGQTIISGMGELHLEILVDRMKREFGVEATVGKPQVAYRETVRTTAADVEGKFVKQSGGRGQYGHAVITLEPNPGKGYEFLDEIKGGVIPREFIPAVDKGITETLKSGVLAGYPVVDVKVHLTFGSYHDVDSNENAFRMAGSMAFKEAMRKAKPVLLEPMMAVEVETPEDFMGNVMGDLSSRRGIVQGMEDIAGGGGKLVRAEVPLAEMFGYSTSLRSATQGRATYTMEFKHYAETPANVSEAVINAKVK</sequence>
<proteinExistence type="inferred from homology"/>
<name>EFG1_BURO1</name>
<gene>
    <name evidence="1" type="primary">fusA1</name>
    <name type="ordered locus">Bcen_1916</name>
</gene>
<comment type="function">
    <text evidence="1">Catalyzes the GTP-dependent ribosomal translocation step during translation elongation. During this step, the ribosome changes from the pre-translocational (PRE) to the post-translocational (POST) state as the newly formed A-site-bound peptidyl-tRNA and P-site-bound deacylated tRNA move to the P and E sites, respectively. Catalyzes the coordinated movement of the two tRNA molecules, the mRNA and conformational changes in the ribosome.</text>
</comment>
<comment type="subcellular location">
    <subcellularLocation>
        <location evidence="1">Cytoplasm</location>
    </subcellularLocation>
</comment>
<comment type="similarity">
    <text evidence="1">Belongs to the TRAFAC class translation factor GTPase superfamily. Classic translation factor GTPase family. EF-G/EF-2 subfamily.</text>
</comment>
<comment type="sequence caution" evidence="2">
    <conflict type="erroneous initiation">
        <sequence resource="EMBL-CDS" id="ABF76819"/>
    </conflict>
</comment>